<keyword id="KW-0687">Ribonucleoprotein</keyword>
<keyword id="KW-0689">Ribosomal protein</keyword>
<keyword id="KW-0694">RNA-binding</keyword>
<keyword id="KW-0699">rRNA-binding</keyword>
<evidence type="ECO:0000255" key="1">
    <source>
        <dbReference type="HAMAP-Rule" id="MF_00362"/>
    </source>
</evidence>
<evidence type="ECO:0000305" key="2"/>
<accession>Q2ST51</accession>
<gene>
    <name evidence="1" type="primary">rplJ</name>
    <name type="ordered locus">MCAP_0067</name>
</gene>
<comment type="function">
    <text evidence="1">Forms part of the ribosomal stalk, playing a central role in the interaction of the ribosome with GTP-bound translation factors.</text>
</comment>
<comment type="subunit">
    <text evidence="1">Part of the ribosomal stalk of the 50S ribosomal subunit. The N-terminus interacts with L11 and the large rRNA to form the base of the stalk. The C-terminus forms an elongated spine to which L12 dimers bind in a sequential fashion forming a multimeric L10(L12)X complex.</text>
</comment>
<comment type="similarity">
    <text evidence="1">Belongs to the universal ribosomal protein uL10 family.</text>
</comment>
<dbReference type="EMBL" id="CP000123">
    <property type="protein sequence ID" value="ABC01175.1"/>
    <property type="molecule type" value="Genomic_DNA"/>
</dbReference>
<dbReference type="RefSeq" id="WP_011386967.1">
    <property type="nucleotide sequence ID" value="NC_007633.1"/>
</dbReference>
<dbReference type="SMR" id="Q2ST51"/>
<dbReference type="GeneID" id="23778978"/>
<dbReference type="KEGG" id="mcp:MCAP_0067"/>
<dbReference type="HOGENOM" id="CLU_092227_2_0_14"/>
<dbReference type="PhylomeDB" id="Q2ST51"/>
<dbReference type="Proteomes" id="UP000001928">
    <property type="component" value="Chromosome"/>
</dbReference>
<dbReference type="GO" id="GO:1990904">
    <property type="term" value="C:ribonucleoprotein complex"/>
    <property type="evidence" value="ECO:0007669"/>
    <property type="project" value="UniProtKB-KW"/>
</dbReference>
<dbReference type="GO" id="GO:0005840">
    <property type="term" value="C:ribosome"/>
    <property type="evidence" value="ECO:0007669"/>
    <property type="project" value="UniProtKB-KW"/>
</dbReference>
<dbReference type="GO" id="GO:0070180">
    <property type="term" value="F:large ribosomal subunit rRNA binding"/>
    <property type="evidence" value="ECO:0007669"/>
    <property type="project" value="UniProtKB-UniRule"/>
</dbReference>
<dbReference type="GO" id="GO:0006412">
    <property type="term" value="P:translation"/>
    <property type="evidence" value="ECO:0007669"/>
    <property type="project" value="UniProtKB-UniRule"/>
</dbReference>
<dbReference type="CDD" id="cd05797">
    <property type="entry name" value="Ribosomal_L10"/>
    <property type="match status" value="1"/>
</dbReference>
<dbReference type="Gene3D" id="3.30.70.1730">
    <property type="match status" value="1"/>
</dbReference>
<dbReference type="HAMAP" id="MF_00362">
    <property type="entry name" value="Ribosomal_uL10"/>
    <property type="match status" value="1"/>
</dbReference>
<dbReference type="InterPro" id="IPR001790">
    <property type="entry name" value="Ribosomal_uL10"/>
</dbReference>
<dbReference type="InterPro" id="IPR043141">
    <property type="entry name" value="Ribosomal_uL10-like_sf"/>
</dbReference>
<dbReference type="InterPro" id="IPR022973">
    <property type="entry name" value="Ribosomal_uL10_bac"/>
</dbReference>
<dbReference type="InterPro" id="IPR047865">
    <property type="entry name" value="Ribosomal_uL10_bac_type"/>
</dbReference>
<dbReference type="NCBIfam" id="NF000955">
    <property type="entry name" value="PRK00099.1-1"/>
    <property type="match status" value="1"/>
</dbReference>
<dbReference type="PANTHER" id="PTHR11560">
    <property type="entry name" value="39S RIBOSOMAL PROTEIN L10, MITOCHONDRIAL"/>
    <property type="match status" value="1"/>
</dbReference>
<dbReference type="Pfam" id="PF00466">
    <property type="entry name" value="Ribosomal_L10"/>
    <property type="match status" value="1"/>
</dbReference>
<dbReference type="SUPFAM" id="SSF160369">
    <property type="entry name" value="Ribosomal protein L10-like"/>
    <property type="match status" value="1"/>
</dbReference>
<organism>
    <name type="scientific">Mycoplasma capricolum subsp. capricolum (strain California kid / ATCC 27343 / NCTC 10154)</name>
    <dbReference type="NCBI Taxonomy" id="340047"/>
    <lineage>
        <taxon>Bacteria</taxon>
        <taxon>Bacillati</taxon>
        <taxon>Mycoplasmatota</taxon>
        <taxon>Mollicutes</taxon>
        <taxon>Mycoplasmataceae</taxon>
        <taxon>Mycoplasma</taxon>
    </lineage>
</organism>
<protein>
    <recommendedName>
        <fullName evidence="1">Large ribosomal subunit protein uL10</fullName>
    </recommendedName>
    <alternativeName>
        <fullName evidence="2">50S ribosomal protein L10</fullName>
    </alternativeName>
</protein>
<name>RL10_MYCCT</name>
<feature type="chain" id="PRO_0000234858" description="Large ribosomal subunit protein uL10">
    <location>
        <begin position="1"/>
        <end position="165"/>
    </location>
</feature>
<reference key="1">
    <citation type="submission" date="2005-09" db="EMBL/GenBank/DDBJ databases">
        <authorList>
            <person name="Glass J.I."/>
            <person name="Lartigue C."/>
            <person name="Pfannkoch C."/>
            <person name="Baden-Tillson H."/>
            <person name="Smith H.O."/>
            <person name="Venter J.C."/>
            <person name="Roske K."/>
            <person name="Wise K.S."/>
            <person name="Calcutt M.J."/>
            <person name="Nelson W.C."/>
            <person name="Nierman W.C."/>
        </authorList>
    </citation>
    <scope>NUCLEOTIDE SEQUENCE [LARGE SCALE GENOMIC DNA]</scope>
    <source>
        <strain>California kid / ATCC 27343 / NCTC 10154</strain>
    </source>
</reference>
<sequence length="165" mass="18135">MSNSRPAHARKAEIVAEIVSKIKSAQGVAIAEYKHLTVAKMTELRVQALKQNIDIKVYKDSLVRRAVEELGLVDLIPFLTQQNVFIFSNEDSISAAKLVANFAKKNEALKLKAGIYEGKVVDTAGINEVASLPSKEELYSMFASSLLYPLRKVMAAINAVAETRN</sequence>
<proteinExistence type="inferred from homology"/>